<protein>
    <recommendedName>
        <fullName evidence="1">Hydroxysqualene synthase</fullName>
        <shortName evidence="1">HSQ synthase</shortName>
        <shortName evidence="1">HSQase</shortName>
        <ecNumber evidence="1">4.2.3.156</ecNumber>
    </recommendedName>
</protein>
<sequence length="292" mass="32540">MTSGSGPRSDAMHREKNFPVASWIIHPRHRALILAFYRFVRMADDIADHATLAPDEKLLYLDLLEAELLGKGETRAEAVHLRTALDRRGMPPRHALDLLTAFRMDVTKQRYENWDEVIDYCRYSAMPVGRFVLDVHGESAATWPASDVLCAGLQVCNHLQDCGKDFLNLNRVYIPRDALSASGASIEELGAAKSSLQMLQCLRSLAAKAEVLLNGGGALVSQVKDFRLRFEVSVILSFADKIVSMLKMRDPLRERVHLSPLELLLHGVGAMANEAARRAFGRGTRFKTTVDV</sequence>
<feature type="chain" id="PRO_0000200798" description="Hydroxysqualene synthase">
    <location>
        <begin position="1"/>
        <end position="292"/>
    </location>
</feature>
<geneLocation type="plasmid">
    <name>sym pNGR234a</name>
</geneLocation>
<name>HPNC_SINFN</name>
<reference key="1">
    <citation type="journal article" date="1997" name="Nature">
        <title>Molecular basis of symbiosis between Rhizobium and legumes.</title>
        <authorList>
            <person name="Freiberg C.A."/>
            <person name="Fellay R."/>
            <person name="Bairoch A."/>
            <person name="Broughton W.J."/>
            <person name="Rosenthal A."/>
            <person name="Perret X."/>
        </authorList>
    </citation>
    <scope>NUCLEOTIDE SEQUENCE [LARGE SCALE GENOMIC DNA]</scope>
    <source>
        <strain>NBRC 101917 / NGR234</strain>
    </source>
</reference>
<reference key="2">
    <citation type="journal article" date="2009" name="Appl. Environ. Microbiol.">
        <title>Rhizobium sp. strain NGR234 possesses a remarkable number of secretion systems.</title>
        <authorList>
            <person name="Schmeisser C."/>
            <person name="Liesegang H."/>
            <person name="Krysciak D."/>
            <person name="Bakkou N."/>
            <person name="Le Quere A."/>
            <person name="Wollherr A."/>
            <person name="Heinemeyer I."/>
            <person name="Morgenstern B."/>
            <person name="Pommerening-Roeser A."/>
            <person name="Flores M."/>
            <person name="Palacios R."/>
            <person name="Brenner S."/>
            <person name="Gottschalk G."/>
            <person name="Schmitz R.A."/>
            <person name="Broughton W.J."/>
            <person name="Perret X."/>
            <person name="Strittmatter A.W."/>
            <person name="Streit W.R."/>
        </authorList>
    </citation>
    <scope>NUCLEOTIDE SEQUENCE [LARGE SCALE GENOMIC DNA]</scope>
    <source>
        <strain>NBRC 101917 / NGR234</strain>
    </source>
</reference>
<keyword id="KW-0456">Lyase</keyword>
<keyword id="KW-0614">Plasmid</keyword>
<keyword id="KW-1185">Reference proteome</keyword>
<evidence type="ECO:0000250" key="1">
    <source>
        <dbReference type="UniProtKB" id="Q6N3F1"/>
    </source>
</evidence>
<evidence type="ECO:0000305" key="2"/>
<comment type="function">
    <text evidence="1">Involved in the biosynthesis of the hopanoid precursor squalene (SQ) from farnesyl diphosphate (FPP). Catalyzes the second step, the conversion of presqualene diphosphate (PSPP) to hydroxysqualene (HSQ).</text>
</comment>
<comment type="catalytic activity">
    <reaction evidence="1">
        <text>presqualene diphosphate + H2O = hydroxysqualene + diphosphate</text>
        <dbReference type="Rhea" id="RHEA:47984"/>
        <dbReference type="ChEBI" id="CHEBI:15377"/>
        <dbReference type="ChEBI" id="CHEBI:33019"/>
        <dbReference type="ChEBI" id="CHEBI:57310"/>
        <dbReference type="ChEBI" id="CHEBI:88123"/>
        <dbReference type="EC" id="4.2.3.156"/>
    </reaction>
</comment>
<comment type="pathway">
    <text evidence="1">Secondary metabolite biosynthesis; hopanoid biosynthesis.</text>
</comment>
<comment type="similarity">
    <text evidence="2">Belongs to the phytoene/squalene synthase family. HpnC subfamily.</text>
</comment>
<organism>
    <name type="scientific">Sinorhizobium fredii (strain NBRC 101917 / NGR234)</name>
    <dbReference type="NCBI Taxonomy" id="394"/>
    <lineage>
        <taxon>Bacteria</taxon>
        <taxon>Pseudomonadati</taxon>
        <taxon>Pseudomonadota</taxon>
        <taxon>Alphaproteobacteria</taxon>
        <taxon>Hyphomicrobiales</taxon>
        <taxon>Rhizobiaceae</taxon>
        <taxon>Sinorhizobium/Ensifer group</taxon>
        <taxon>Sinorhizobium</taxon>
    </lineage>
</organism>
<proteinExistence type="inferred from homology"/>
<gene>
    <name type="ordered locus">NGR_a00430</name>
    <name type="ORF">y4aD</name>
</gene>
<dbReference type="EC" id="4.2.3.156" evidence="1"/>
<dbReference type="EMBL" id="U00090">
    <property type="protein sequence ID" value="AAB91602.1"/>
    <property type="molecule type" value="Genomic_DNA"/>
</dbReference>
<dbReference type="RefSeq" id="NP_443764.1">
    <property type="nucleotide sequence ID" value="NC_000914.2"/>
</dbReference>
<dbReference type="RefSeq" id="WP_010875085.1">
    <property type="nucleotide sequence ID" value="NC_000914.2"/>
</dbReference>
<dbReference type="SMR" id="P55351"/>
<dbReference type="KEGG" id="rhi:NGR_a00430"/>
<dbReference type="PATRIC" id="fig|394.7.peg.40"/>
<dbReference type="eggNOG" id="COG1562">
    <property type="taxonomic scope" value="Bacteria"/>
</dbReference>
<dbReference type="HOGENOM" id="CLU_037269_0_1_5"/>
<dbReference type="OrthoDB" id="9807580at2"/>
<dbReference type="UniPathway" id="UPA00337"/>
<dbReference type="Proteomes" id="UP000001054">
    <property type="component" value="Plasmid pNGR234a"/>
</dbReference>
<dbReference type="GO" id="GO:0004311">
    <property type="term" value="F:geranylgeranyl diphosphate synthase activity"/>
    <property type="evidence" value="ECO:0007669"/>
    <property type="project" value="InterPro"/>
</dbReference>
<dbReference type="GO" id="GO:0016829">
    <property type="term" value="F:lyase activity"/>
    <property type="evidence" value="ECO:0007669"/>
    <property type="project" value="UniProtKB-KW"/>
</dbReference>
<dbReference type="GO" id="GO:0051996">
    <property type="term" value="F:squalene synthase [NAD(P)H] activity"/>
    <property type="evidence" value="ECO:0007669"/>
    <property type="project" value="InterPro"/>
</dbReference>
<dbReference type="GO" id="GO:0016114">
    <property type="term" value="P:terpenoid biosynthetic process"/>
    <property type="evidence" value="ECO:0007669"/>
    <property type="project" value="UniProtKB-ARBA"/>
</dbReference>
<dbReference type="CDD" id="cd00683">
    <property type="entry name" value="Trans_IPPS_HH"/>
    <property type="match status" value="1"/>
</dbReference>
<dbReference type="Gene3D" id="1.10.600.10">
    <property type="entry name" value="Farnesyl Diphosphate Synthase"/>
    <property type="match status" value="1"/>
</dbReference>
<dbReference type="InterPro" id="IPR017827">
    <property type="entry name" value="HSQ_synthase_HpnC"/>
</dbReference>
<dbReference type="InterPro" id="IPR008949">
    <property type="entry name" value="Isoprenoid_synthase_dom_sf"/>
</dbReference>
<dbReference type="InterPro" id="IPR002060">
    <property type="entry name" value="Squ/phyt_synthse"/>
</dbReference>
<dbReference type="InterPro" id="IPR044843">
    <property type="entry name" value="Trans_IPPS_bact-type"/>
</dbReference>
<dbReference type="InterPro" id="IPR033904">
    <property type="entry name" value="Trans_IPPS_HH"/>
</dbReference>
<dbReference type="NCBIfam" id="TIGR03464">
    <property type="entry name" value="HpnC"/>
    <property type="match status" value="1"/>
</dbReference>
<dbReference type="PANTHER" id="PTHR31480">
    <property type="entry name" value="BIFUNCTIONAL LYCOPENE CYCLASE/PHYTOENE SYNTHASE"/>
    <property type="match status" value="1"/>
</dbReference>
<dbReference type="Pfam" id="PF00494">
    <property type="entry name" value="SQS_PSY"/>
    <property type="match status" value="1"/>
</dbReference>
<dbReference type="SFLD" id="SFLDS00005">
    <property type="entry name" value="Isoprenoid_Synthase_Type_I"/>
    <property type="match status" value="1"/>
</dbReference>
<dbReference type="SFLD" id="SFLDG01212">
    <property type="entry name" value="Phytoene_synthase_like"/>
    <property type="match status" value="1"/>
</dbReference>
<dbReference type="SUPFAM" id="SSF48576">
    <property type="entry name" value="Terpenoid synthases"/>
    <property type="match status" value="1"/>
</dbReference>
<accession>P55351</accession>